<protein>
    <recommendedName>
        <fullName evidence="1">Transcriptional regulator SlyA</fullName>
    </recommendedName>
</protein>
<organism>
    <name type="scientific">Blochmanniella floridana</name>
    <dbReference type="NCBI Taxonomy" id="203907"/>
    <lineage>
        <taxon>Bacteria</taxon>
        <taxon>Pseudomonadati</taxon>
        <taxon>Pseudomonadota</taxon>
        <taxon>Gammaproteobacteria</taxon>
        <taxon>Enterobacterales</taxon>
        <taxon>Enterobacteriaceae</taxon>
        <taxon>ant endosymbionts</taxon>
        <taxon>Candidatus Blochmanniella</taxon>
    </lineage>
</organism>
<keyword id="KW-0010">Activator</keyword>
<keyword id="KW-0238">DNA-binding</keyword>
<keyword id="KW-1185">Reference proteome</keyword>
<keyword id="KW-0678">Repressor</keyword>
<keyword id="KW-0804">Transcription</keyword>
<keyword id="KW-0805">Transcription regulation</keyword>
<gene>
    <name evidence="1" type="primary">slyA</name>
    <name type="ordered locus">Bfl369</name>
</gene>
<proteinExistence type="inferred from homology"/>
<reference key="1">
    <citation type="journal article" date="2003" name="Proc. Natl. Acad. Sci. U.S.A.">
        <title>The genome sequence of Blochmannia floridanus: comparative analysis of reduced genomes.</title>
        <authorList>
            <person name="Gil R."/>
            <person name="Silva F.J."/>
            <person name="Zientz E."/>
            <person name="Delmotte F."/>
            <person name="Gonzalez-Candelas F."/>
            <person name="Latorre A."/>
            <person name="Rausell C."/>
            <person name="Kamerbeek J."/>
            <person name="Gadau J."/>
            <person name="Hoelldobler B."/>
            <person name="van Ham R.C.H.J."/>
            <person name="Gross R."/>
            <person name="Moya A."/>
        </authorList>
    </citation>
    <scope>NUCLEOTIDE SEQUENCE [LARGE SCALE GENOMIC DNA]</scope>
</reference>
<name>SLYA_BLOFL</name>
<evidence type="ECO:0000255" key="1">
    <source>
        <dbReference type="HAMAP-Rule" id="MF_01819"/>
    </source>
</evidence>
<dbReference type="EMBL" id="BX248583">
    <property type="protein sequence ID" value="CAD83435.1"/>
    <property type="molecule type" value="Genomic_DNA"/>
</dbReference>
<dbReference type="SMR" id="Q7VR54"/>
<dbReference type="STRING" id="203907.Bfl369"/>
<dbReference type="KEGG" id="bfl:Bfl369"/>
<dbReference type="eggNOG" id="COG1846">
    <property type="taxonomic scope" value="Bacteria"/>
</dbReference>
<dbReference type="HOGENOM" id="CLU_083287_18_2_6"/>
<dbReference type="OrthoDB" id="5296557at2"/>
<dbReference type="Proteomes" id="UP000002192">
    <property type="component" value="Chromosome"/>
</dbReference>
<dbReference type="GO" id="GO:0003677">
    <property type="term" value="F:DNA binding"/>
    <property type="evidence" value="ECO:0007669"/>
    <property type="project" value="UniProtKB-UniRule"/>
</dbReference>
<dbReference type="GO" id="GO:0003700">
    <property type="term" value="F:DNA-binding transcription factor activity"/>
    <property type="evidence" value="ECO:0007669"/>
    <property type="project" value="UniProtKB-UniRule"/>
</dbReference>
<dbReference type="GO" id="GO:0006950">
    <property type="term" value="P:response to stress"/>
    <property type="evidence" value="ECO:0007669"/>
    <property type="project" value="TreeGrafter"/>
</dbReference>
<dbReference type="Gene3D" id="1.10.10.10">
    <property type="entry name" value="Winged helix-like DNA-binding domain superfamily/Winged helix DNA-binding domain"/>
    <property type="match status" value="1"/>
</dbReference>
<dbReference type="HAMAP" id="MF_01819">
    <property type="entry name" value="HTH_type_SlyA"/>
    <property type="match status" value="1"/>
</dbReference>
<dbReference type="InterPro" id="IPR000835">
    <property type="entry name" value="HTH_MarR-typ"/>
</dbReference>
<dbReference type="InterPro" id="IPR039422">
    <property type="entry name" value="MarR/SlyA-like"/>
</dbReference>
<dbReference type="InterPro" id="IPR023187">
    <property type="entry name" value="Tscrpt_reg_MarR-type_CS"/>
</dbReference>
<dbReference type="InterPro" id="IPR023071">
    <property type="entry name" value="Tscrpt_reg_SlyA"/>
</dbReference>
<dbReference type="InterPro" id="IPR036388">
    <property type="entry name" value="WH-like_DNA-bd_sf"/>
</dbReference>
<dbReference type="InterPro" id="IPR036390">
    <property type="entry name" value="WH_DNA-bd_sf"/>
</dbReference>
<dbReference type="NCBIfam" id="NF002926">
    <property type="entry name" value="PRK03573.1"/>
    <property type="match status" value="1"/>
</dbReference>
<dbReference type="PANTHER" id="PTHR33164:SF64">
    <property type="entry name" value="TRANSCRIPTIONAL REGULATOR SLYA"/>
    <property type="match status" value="1"/>
</dbReference>
<dbReference type="PANTHER" id="PTHR33164">
    <property type="entry name" value="TRANSCRIPTIONAL REGULATOR, MARR FAMILY"/>
    <property type="match status" value="1"/>
</dbReference>
<dbReference type="Pfam" id="PF01047">
    <property type="entry name" value="MarR"/>
    <property type="match status" value="1"/>
</dbReference>
<dbReference type="PRINTS" id="PR00598">
    <property type="entry name" value="HTHMARR"/>
</dbReference>
<dbReference type="SMART" id="SM00347">
    <property type="entry name" value="HTH_MARR"/>
    <property type="match status" value="1"/>
</dbReference>
<dbReference type="SUPFAM" id="SSF46785">
    <property type="entry name" value="Winged helix' DNA-binding domain"/>
    <property type="match status" value="1"/>
</dbReference>
<dbReference type="PROSITE" id="PS01117">
    <property type="entry name" value="HTH_MARR_1"/>
    <property type="match status" value="1"/>
</dbReference>
<dbReference type="PROSITE" id="PS50995">
    <property type="entry name" value="HTH_MARR_2"/>
    <property type="match status" value="1"/>
</dbReference>
<accession>Q7VR54</accession>
<sequence>MESSLGSDLARLVRIWRALIDYRLKPLKLTQTHWITLHNIYQLPPDQSQIQLAKAIGIEQPSLVRTLDQLESKGLIVRNICSNDRRAKRITLTELAKPVINQVNQVINVTRNEVFYGLRVEEIQQLNNIIAKLERNIINLYNKT</sequence>
<comment type="function">
    <text evidence="1">Transcription regulator that can specifically activate or repress expression of target genes.</text>
</comment>
<comment type="subunit">
    <text evidence="1">Homodimer.</text>
</comment>
<comment type="similarity">
    <text evidence="1">Belongs to the SlyA family.</text>
</comment>
<feature type="chain" id="PRO_0000054382" description="Transcriptional regulator SlyA">
    <location>
        <begin position="1"/>
        <end position="144"/>
    </location>
</feature>
<feature type="domain" description="HTH marR-type" evidence="1">
    <location>
        <begin position="2"/>
        <end position="135"/>
    </location>
</feature>
<feature type="DNA-binding region" description="H-T-H motif" evidence="1">
    <location>
        <begin position="49"/>
        <end position="72"/>
    </location>
</feature>